<dbReference type="EMBL" id="GQ413938">
    <property type="protein sequence ID" value="ACY66723.1"/>
    <property type="molecule type" value="Genomic_DNA"/>
</dbReference>
<dbReference type="RefSeq" id="YP_003347643.1">
    <property type="nucleotide sequence ID" value="NC_013649.2"/>
</dbReference>
<dbReference type="SMR" id="D1L2Z4"/>
<dbReference type="GeneID" id="8683392"/>
<dbReference type="KEGG" id="vg:8683392"/>
<dbReference type="OrthoDB" id="5710at10239"/>
<dbReference type="Proteomes" id="UP000002633">
    <property type="component" value="Genome"/>
</dbReference>
<dbReference type="GO" id="GO:0098015">
    <property type="term" value="C:virus tail"/>
    <property type="evidence" value="ECO:0007669"/>
    <property type="project" value="UniProtKB-KW"/>
</dbReference>
<dbReference type="InterPro" id="IPR005604">
    <property type="entry name" value="Phage_T7_tail_fibre-like_N"/>
</dbReference>
<dbReference type="Pfam" id="PF03906">
    <property type="entry name" value="Phage_T7_tail"/>
    <property type="match status" value="1"/>
</dbReference>
<name>ANCHR_BPK34</name>
<comment type="function">
    <text evidence="1">Anchors indirectly the receptor binding (RBP) protein (depolymerase) to the virion.</text>
</comment>
<comment type="subcellular location">
    <subcellularLocation>
        <location evidence="3">Virion</location>
    </subcellularLocation>
</comment>
<reference key="1">
    <citation type="journal article" date="2011" name="Appl. Microbiol. Biotechnol.">
        <title>Isolation and characterisation of KP34-a novel phiKMV-like bacteriophage for Klebsiella pneumoniae.</title>
        <authorList>
            <person name="Drulis-Kawa Z."/>
            <person name="Mackiewicz P."/>
            <person name="Kesik-Szeloch A."/>
            <person name="Maciaszczyk-Dziubinska E."/>
            <person name="Weber-Dabrowska B."/>
            <person name="Dorotkiewicz-Jach A."/>
            <person name="Augustyniak D."/>
            <person name="Majkowska-Skrobek G."/>
            <person name="Bocer T."/>
            <person name="Empel J."/>
            <person name="Kropinski A.M."/>
        </authorList>
    </citation>
    <scope>NUCLEOTIDE SEQUENCE [LARGE SCALE GENOMIC DNA]</scope>
</reference>
<reference key="2">
    <citation type="journal article" date="2021" name="MBio">
        <title>Engineering the Modular Receptor-Binding Proteins of Klebsiella Phages Switches Their Capsule Serotype Specificity.</title>
        <authorList>
            <person name="Latka A."/>
            <person name="Lemire S."/>
            <person name="Grimon D."/>
            <person name="Dams D."/>
            <person name="Maciejewska B."/>
            <person name="Lu T."/>
            <person name="Drulis-Kawa Z."/>
            <person name="Briers Y."/>
        </authorList>
    </citation>
    <scope>FUNCTION</scope>
</reference>
<reference key="3">
    <citation type="journal article" date="2019" name="Front. Microbiol.">
        <title>Modeling the Architecture of Depolymerase-Containing Receptor Binding Proteins in Klebsiella Phages.</title>
        <authorList>
            <person name="Latka A."/>
            <person name="Leiman P.G."/>
            <person name="Drulis-Kawa Z."/>
            <person name="Briers Y."/>
        </authorList>
    </citation>
    <scope>REVIEW</scope>
</reference>
<protein>
    <recommendedName>
        <fullName evidence="2">Anchor protein</fullName>
    </recommendedName>
    <alternativeName>
        <fullName evidence="3">Gene product 49</fullName>
        <shortName evidence="3">gp49</shortName>
    </alternativeName>
    <alternativeName>
        <fullName evidence="2">KP34gp49</fullName>
    </alternativeName>
</protein>
<evidence type="ECO:0000269" key="1">
    <source>
    </source>
</evidence>
<evidence type="ECO:0000303" key="2">
    <source>
    </source>
</evidence>
<evidence type="ECO:0000305" key="3"/>
<evidence type="ECO:0000312" key="4">
    <source>
        <dbReference type="EMBL" id="ACY66723.1"/>
    </source>
</evidence>
<feature type="chain" id="PRO_0000458724" description="Anchor protein">
    <location>
        <begin position="1"/>
        <end position="307"/>
    </location>
</feature>
<accession>D1L2Z4</accession>
<organism>
    <name type="scientific">Klebsiella phage KP34</name>
    <name type="common">Bacteriophage KP34</name>
    <dbReference type="NCBI Taxonomy" id="674081"/>
    <lineage>
        <taxon>Viruses</taxon>
        <taxon>Duplodnaviria</taxon>
        <taxon>Heunggongvirae</taxon>
        <taxon>Uroviricota</taxon>
        <taxon>Caudoviricetes</taxon>
        <taxon>Autographiviridae</taxon>
        <taxon>Slopekvirinae</taxon>
        <taxon>Drulisvirus</taxon>
        <taxon>Drulisvirus KP34</taxon>
    </lineage>
</organism>
<proteinExistence type="predicted"/>
<gene>
    <name evidence="4" type="primary">49</name>
</gene>
<keyword id="KW-1185">Reference proteome</keyword>
<keyword id="KW-1227">Viral tail protein</keyword>
<keyword id="KW-0946">Virion</keyword>
<sequence length="307" mass="32724">MAFSWQEQIKPAGTQDIQCDIEYLDKSYIHVYLDGVETTGYTWTSATNIRLNTALAASTTVLLIRKTEREYLYIEFASGSPFIEVNVDSQNTQFLHLAQELVEGRAIPGFYGTISMNGYRITDLANPINSQDAATKSYVDAADALLGQRIDVEAATRKAADDALSMRTSALENTFISGVETVSYPWSTVLAEATDEVTPGLAFTKAVVEINGVGQIRGYSFEIVDNTILFAKTLPAGTVVAARLGADVTAGDGFATQASVDYLADSLGDLAYLDTAEAVPDATGAGDVVAKLNALLASLRTSGVLAS</sequence>